<feature type="chain" id="PRO_0000225502" description="Bifunctional DNA-directed RNA polymerase subunit beta-beta'">
    <location>
        <begin position="1"/>
        <end position="2837"/>
    </location>
</feature>
<feature type="region of interest" description="DNA-directed RNA polymerase subunit beta">
    <location>
        <begin position="1"/>
        <end position="1433"/>
    </location>
</feature>
<feature type="region of interest" description="DNA-directed RNA polymerase subunit beta'">
    <location>
        <begin position="1436"/>
        <end position="2837"/>
    </location>
</feature>
<feature type="binding site" evidence="3">
    <location>
        <position position="1501"/>
    </location>
    <ligand>
        <name>Zn(2+)</name>
        <dbReference type="ChEBI" id="CHEBI:29105"/>
        <label>1</label>
    </ligand>
</feature>
<feature type="binding site" evidence="3">
    <location>
        <position position="1503"/>
    </location>
    <ligand>
        <name>Zn(2+)</name>
        <dbReference type="ChEBI" id="CHEBI:29105"/>
        <label>1</label>
    </ligand>
</feature>
<feature type="binding site" evidence="3">
    <location>
        <position position="1516"/>
    </location>
    <ligand>
        <name>Zn(2+)</name>
        <dbReference type="ChEBI" id="CHEBI:29105"/>
        <label>1</label>
    </ligand>
</feature>
<feature type="binding site" evidence="3">
    <location>
        <position position="1519"/>
    </location>
    <ligand>
        <name>Zn(2+)</name>
        <dbReference type="ChEBI" id="CHEBI:29105"/>
        <label>1</label>
    </ligand>
</feature>
<feature type="binding site" evidence="3">
    <location>
        <position position="1893"/>
    </location>
    <ligand>
        <name>Mg(2+)</name>
        <dbReference type="ChEBI" id="CHEBI:18420"/>
    </ligand>
</feature>
<feature type="binding site" evidence="3">
    <location>
        <position position="1895"/>
    </location>
    <ligand>
        <name>Mg(2+)</name>
        <dbReference type="ChEBI" id="CHEBI:18420"/>
    </ligand>
</feature>
<feature type="binding site" evidence="3">
    <location>
        <position position="1897"/>
    </location>
    <ligand>
        <name>Mg(2+)</name>
        <dbReference type="ChEBI" id="CHEBI:18420"/>
    </ligand>
</feature>
<feature type="binding site" evidence="3">
    <location>
        <position position="2235"/>
    </location>
    <ligand>
        <name>Zn(2+)</name>
        <dbReference type="ChEBI" id="CHEBI:29105"/>
        <label>2</label>
    </ligand>
</feature>
<feature type="binding site" evidence="3">
    <location>
        <position position="2309"/>
    </location>
    <ligand>
        <name>Zn(2+)</name>
        <dbReference type="ChEBI" id="CHEBI:29105"/>
        <label>2</label>
    </ligand>
</feature>
<feature type="binding site" evidence="3">
    <location>
        <position position="2316"/>
    </location>
    <ligand>
        <name>Zn(2+)</name>
        <dbReference type="ChEBI" id="CHEBI:29105"/>
        <label>2</label>
    </ligand>
</feature>
<feature type="binding site" evidence="3">
    <location>
        <position position="2319"/>
    </location>
    <ligand>
        <name>Zn(2+)</name>
        <dbReference type="ChEBI" id="CHEBI:29105"/>
        <label>2</label>
    </ligand>
</feature>
<sequence>MVDSSYMYASGAFVPRVSYSRSIDLKDSLLDLVKVQKESYDSFTPKNKGNERLEVIFHTIFPINDPLRRATIEFISCRVDDPKYDESECIKRGVTFSAQVIASIRLVVMQDGISLDEYKSIKESGDHSKLATVVKSIEEQKVHFCGLPMMTDKGTFIINGVEKVIVSQMHRSPGVFFDSDKGKTYNSGKLIYSARIIPYRGSWLDIEFDVKDHLYFRVDRKRKLPISVLLKALGLSNNDILDRFYEKIKYVKHKDGWKVPFVPDKFKGVRLPFDLMDIEGNVLLKANVRITSRLAKKLYDNELKEYLVPFNSICGLFLAEDLMDSASSTKILSAGESIKLEDIKKLELLSVDEISVLNIDNLFVGPYILNTLFLDENMSYQDALYEIYRVLRPGEVPVLEIVEEFFRNLFFSPEYYDLSNIGRLKLNSYLGLNYDEDLTVLTHEDIIEIVKKIVLLRDGQGSVDDIDHLGNRRVRSVGEFIENQFRTGLLKLERAIVDSMSTSSLDKVSPSDFINPKVLTNVLRDFFNSSQLSQFMDQTNPLSEITHKRRLSALGPGGLTRERAGFEVRDVHPTHYGRICPIETPEGQNIGLINSLAIYARINKYGFIESPYRKVVNRVVTDQIEYLSAIDEGSHHIADTSVKLDENNCFVDDMLYCRYAGSFVMVSSDQVSYIDVSPKQVISVAASLIPFLENDDANRALMGSNMQRQAVPLLKPTAPLVATGMESFVASGSGAVVLAKRDGIVDSSDSNSIVIRAFDKERVNYLDVDIYHLRKFQRSNHNTCINQRPLVCVGDYVKKGDVIADGPAINSGELALGKNLLVAFMSWQGYNFEDSIIISSEVVKKDLFTSIHIEEFDCVVHDTPLGSEKITRAIPGVNEENLYHLDDSGIVKIGTRVGPGYILVGKVTPKPSLSLPPETKLLMTIFGEKSFDCADSSLYTSPDVEGTVIDVQVFTRRGVEENERALLIKQKEINDFEEERDYIINVTSEYFYDELKKLLINSGSQDREKFDSIEREQWWGIGLKNQSISEQVKSLKKDFDEKVSHAIAQFKRKVEKLHEGYDLPQGVSMSVKVFIAVKHSLQPGDKMAGRHGNKGVISRVVPVEDMPYLEDGTPVDIILNPLGVPSRMNVGQILETHVGWACRKLGEKVSNILDEINKIKSAFCKGIRSLNDDNFTQFAVAYLDNKKIENIDDDEITASVLNTPNKNALNDELNELVENYLNSCKSSYSNLRNFLIEVYSYGSNVSICNDIRNISDNNLIEFARKLRDGVPVAAPVFEGPKDEQIAKLFELAGLDNSGQAVLYDGCSGEKFDRKVTVGYMYMLKLHHLVDGKIHARSVGPYSLVTQQPLGGKSHFGGQRFGEMECWALQAYGAAYTLQEMLTVKSDDINGRVKIYESIIKGDSNFECGIPESFNVMIKELRSLCLNVDLKQNDVVIEDISHTNIAQPFNEVSISIASPESIKRISCGEIEDVLTANYRTFKVEKGGLFCPKVFGPVNDDECLCGKYKKRRHRGRICEKCGVEVTSSKVRRERMGHIELASPVAHIWFLKSLPSRIGALLDMSLRDIENILYSDNYIVIDPLVSPFEKGEIISEKAYNEAKDSYGIDSFVAMQGVEAIRELLTRLDLHEIRKDLRLELESVASEIRRKKIIKRLRIVENFIKSGNRPEWMILTTIPILPPDLRPLVSLESGRPAVSDLNHHYRTIINRNNRLRKLLSLNPPEIMIRNEKRMLQEAVDSLFDNSRRNTLVNKAGAVGYKKSISDMLKGKQGRFRQNLLGKRVDYSGRSVIVVGPTLKLNQCGLPKRMALELFKPFVYSKLKMYGMAPTIKFASKLIRAEKPEVWDMLEEVIKEHPVLLNRAPTLHRLGIQAFEPILIEGKAIQLHPLVCTAFNADFDGDQMAVHVPISLEAQLEARVLMMSTNNVLSPSNGRPIIVPSKDIVLGIYYLTLQEPKEDNLPSFGAFCEVEHSLSDGILHIHSSIKYRMEYINSSGETHYKTVCTTPGRLILWQIFPKHENLGFDLINQILTVKEITGIVDLVYRNCGQSATVAFSDKLMVLGFEYATFSGVSFGRCDMVIPETKATHVDHARGEIKKFSMQYQDGLITRSERYNKVIDEWSKCTDMIANDMLKAISIYDGNSKYNSVYMMVNSGARGSTSQMKQLAGMRGLMTKPSGEIIETPIISNFREGLNVFEYFNSTHGARKGLADTALKTANSGYLTRRLVDVSQNCIVAKHDCKTKNGLVVRATVEGSTIVASLESVVLGRTAANDIYNPVTKELLVKAGELIDEDKVKQISIAGLDVVKIRSPLTCEISPGVCSLCYGRDLATGKIVSIGEAVGVIAAQSVGEPGTQLTMRTFHIGGVMTRGVESSNIIASINAKIKLNNSNIIIDRNGNKIVISRSCEVVLIDSLGSEKLKHSVPYGAKLYVDESGSVKIGDKVAEWDPYTLPIITEKTGTVSYQDLKDGISITEVMDESTGISSKVVKDWKLHSGGANLRPRIVLLDDNGKVMTLASGVEACYFIPIGAVLNVQDGQKVHAGDVITRTPRESVKTRDITGGLPRVIELFEARRPKEHAIVSEIDGYVAFSEKDRRGKRSILIKPVDEQISPVEYLVSRSKHVIVNESDFVRKGDLLMDGDPDLHDILRVLGLEALAHYMISEIQQVYRLQGVRIDNKHLEVILKQMLQKVEITDPGDTMYLVGESIDKLEVDRENDAMSNSGKRPTHYLPILQGITRASLETSSFISAASFQETTKVLTEAAFCGKSDPLSGLKENVIVGRLIPAGTGLIMNKIRALSLCDNVDKYEKYFDIETYDEEWLMDNGCHLHSDEEESVVAYDQSN</sequence>
<organism>
    <name type="scientific">Wolbachia pipientis wMel</name>
    <dbReference type="NCBI Taxonomy" id="163164"/>
    <lineage>
        <taxon>Bacteria</taxon>
        <taxon>Pseudomonadati</taxon>
        <taxon>Pseudomonadota</taxon>
        <taxon>Alphaproteobacteria</taxon>
        <taxon>Rickettsiales</taxon>
        <taxon>Anaplasmataceae</taxon>
        <taxon>Wolbachieae</taxon>
        <taxon>Wolbachia</taxon>
    </lineage>
</organism>
<protein>
    <recommendedName>
        <fullName>Bifunctional DNA-directed RNA polymerase subunit beta-beta'</fullName>
        <ecNumber evidence="2 3">2.7.7.6</ecNumber>
    </recommendedName>
    <domain>
        <recommendedName>
            <fullName evidence="2">DNA-directed RNA polymerase subunit beta</fullName>
        </recommendedName>
        <alternativeName>
            <fullName evidence="2">RNA polymerase subunit beta</fullName>
        </alternativeName>
        <alternativeName>
            <fullName evidence="2">Transcriptase subunit beta</fullName>
        </alternativeName>
    </domain>
    <domain>
        <recommendedName>
            <fullName evidence="3">DNA-directed RNA polymerase subunit beta'</fullName>
        </recommendedName>
        <alternativeName>
            <fullName evidence="3">RNA polymerase beta'</fullName>
        </alternativeName>
        <alternativeName>
            <fullName evidence="3">Transcriptase subunit beta'</fullName>
        </alternativeName>
    </domain>
</protein>
<name>RPOBC_WOLPM</name>
<comment type="function">
    <text evidence="2 3">DNA-dependent RNA polymerase catalyzes the transcription of DNA into RNA using the four ribonucleoside triphosphates as substrates.</text>
</comment>
<comment type="catalytic activity">
    <reaction evidence="2 3">
        <text>RNA(n) + a ribonucleoside 5'-triphosphate = RNA(n+1) + diphosphate</text>
        <dbReference type="Rhea" id="RHEA:21248"/>
        <dbReference type="Rhea" id="RHEA-COMP:14527"/>
        <dbReference type="Rhea" id="RHEA-COMP:17342"/>
        <dbReference type="ChEBI" id="CHEBI:33019"/>
        <dbReference type="ChEBI" id="CHEBI:61557"/>
        <dbReference type="ChEBI" id="CHEBI:140395"/>
        <dbReference type="EC" id="2.7.7.6"/>
    </reaction>
</comment>
<comment type="cofactor">
    <cofactor evidence="3">
        <name>Mg(2+)</name>
        <dbReference type="ChEBI" id="CHEBI:18420"/>
    </cofactor>
    <text evidence="3">Binds 1 Mg(2+) ion per subunit.</text>
</comment>
<comment type="cofactor">
    <cofactor evidence="3">
        <name>Zn(2+)</name>
        <dbReference type="ChEBI" id="CHEBI:29105"/>
    </cofactor>
    <text evidence="3">Binds 2 Zn(2+) ions per subunit.</text>
</comment>
<comment type="subunit">
    <text evidence="2 3">The RNAP catalytic core consists of 2 alpha, 1 beta/beta' and 1 omega subunit. When a sigma factor is associated with the core the holoenzyme is formed, which can initiate transcription.</text>
</comment>
<comment type="miscellaneous">
    <text evidence="1">Fusion of rpoB and rpoC occurs naturally in Helicobacter species and at least some Wolbachia; the protein has been artificially split in two in H.pylori. The split protein seems to function normally.</text>
</comment>
<comment type="similarity">
    <text evidence="4">In the N-terminal section; belongs to the RNA polymerase beta chain family.</text>
</comment>
<comment type="similarity">
    <text evidence="4">In the C-terminal section; belongs to the RNA polymerase beta' chain family.</text>
</comment>
<reference key="1">
    <citation type="journal article" date="2004" name="PLoS Biol.">
        <title>Phylogenomics of the reproductive parasite Wolbachia pipientis wMel: a streamlined genome overrun by mobile genetic elements.</title>
        <authorList>
            <person name="Wu M."/>
            <person name="Sun L.V."/>
            <person name="Vamathevan J.J."/>
            <person name="Riegler M."/>
            <person name="DeBoy R.T."/>
            <person name="Brownlie J.C."/>
            <person name="McGraw E.A."/>
            <person name="Martin W."/>
            <person name="Esser C."/>
            <person name="Ahmadinejad N."/>
            <person name="Wiegand C."/>
            <person name="Madupu R."/>
            <person name="Beanan M.J."/>
            <person name="Brinkac L.M."/>
            <person name="Daugherty S.C."/>
            <person name="Durkin A.S."/>
            <person name="Kolonay J.F."/>
            <person name="Nelson W.C."/>
            <person name="Mohamoud Y."/>
            <person name="Lee P."/>
            <person name="Berry K.J."/>
            <person name="Young M.B."/>
            <person name="Utterback T.R."/>
            <person name="Weidman J.F."/>
            <person name="Nierman W.C."/>
            <person name="Paulsen I.T."/>
            <person name="Nelson K.E."/>
            <person name="Tettelin H."/>
            <person name="O'Neill S.L."/>
            <person name="Eisen J.A."/>
        </authorList>
    </citation>
    <scope>NUCLEOTIDE SEQUENCE [LARGE SCALE GENOMIC DNA]</scope>
</reference>
<proteinExistence type="inferred from homology"/>
<evidence type="ECO:0000250" key="1">
    <source>
        <dbReference type="UniProtKB" id="O25806"/>
    </source>
</evidence>
<evidence type="ECO:0000255" key="2">
    <source>
        <dbReference type="HAMAP-Rule" id="MF_01321"/>
    </source>
</evidence>
<evidence type="ECO:0000255" key="3">
    <source>
        <dbReference type="HAMAP-Rule" id="MF_01322"/>
    </source>
</evidence>
<evidence type="ECO:0000305" key="4"/>
<keyword id="KW-0240">DNA-directed RNA polymerase</keyword>
<keyword id="KW-0460">Magnesium</keyword>
<keyword id="KW-0479">Metal-binding</keyword>
<keyword id="KW-0548">Nucleotidyltransferase</keyword>
<keyword id="KW-0804">Transcription</keyword>
<keyword id="KW-0808">Transferase</keyword>
<keyword id="KW-0862">Zinc</keyword>
<gene>
    <name type="primary">rpoBC</name>
    <name type="ordered locus">WD_0024</name>
</gene>
<accession>Q73IW9</accession>
<dbReference type="EC" id="2.7.7.6" evidence="2 3"/>
<dbReference type="EMBL" id="AE017196">
    <property type="protein sequence ID" value="AAS13791.1"/>
    <property type="molecule type" value="Genomic_DNA"/>
</dbReference>
<dbReference type="SMR" id="Q73IW9"/>
<dbReference type="EnsemblBacteria" id="AAS13791">
    <property type="protein sequence ID" value="AAS13791"/>
    <property type="gene ID" value="WD_0024"/>
</dbReference>
<dbReference type="KEGG" id="wol:WD_0024"/>
<dbReference type="eggNOG" id="COG0085">
    <property type="taxonomic scope" value="Bacteria"/>
</dbReference>
<dbReference type="eggNOG" id="COG0086">
    <property type="taxonomic scope" value="Bacteria"/>
</dbReference>
<dbReference type="Proteomes" id="UP000008215">
    <property type="component" value="Chromosome"/>
</dbReference>
<dbReference type="GO" id="GO:0000428">
    <property type="term" value="C:DNA-directed RNA polymerase complex"/>
    <property type="evidence" value="ECO:0007669"/>
    <property type="project" value="UniProtKB-KW"/>
</dbReference>
<dbReference type="GO" id="GO:0003677">
    <property type="term" value="F:DNA binding"/>
    <property type="evidence" value="ECO:0007669"/>
    <property type="project" value="UniProtKB-UniRule"/>
</dbReference>
<dbReference type="GO" id="GO:0003899">
    <property type="term" value="F:DNA-directed RNA polymerase activity"/>
    <property type="evidence" value="ECO:0007669"/>
    <property type="project" value="UniProtKB-UniRule"/>
</dbReference>
<dbReference type="GO" id="GO:0000287">
    <property type="term" value="F:magnesium ion binding"/>
    <property type="evidence" value="ECO:0007669"/>
    <property type="project" value="UniProtKB-UniRule"/>
</dbReference>
<dbReference type="GO" id="GO:0032549">
    <property type="term" value="F:ribonucleoside binding"/>
    <property type="evidence" value="ECO:0007669"/>
    <property type="project" value="InterPro"/>
</dbReference>
<dbReference type="GO" id="GO:0008270">
    <property type="term" value="F:zinc ion binding"/>
    <property type="evidence" value="ECO:0007669"/>
    <property type="project" value="UniProtKB-UniRule"/>
</dbReference>
<dbReference type="GO" id="GO:0006351">
    <property type="term" value="P:DNA-templated transcription"/>
    <property type="evidence" value="ECO:0007669"/>
    <property type="project" value="UniProtKB-UniRule"/>
</dbReference>
<dbReference type="CDD" id="cd00653">
    <property type="entry name" value="RNA_pol_B_RPB2"/>
    <property type="match status" value="1"/>
</dbReference>
<dbReference type="CDD" id="cd02655">
    <property type="entry name" value="RNAP_beta'_C"/>
    <property type="match status" value="1"/>
</dbReference>
<dbReference type="CDD" id="cd01609">
    <property type="entry name" value="RNAP_beta'_N"/>
    <property type="match status" value="1"/>
</dbReference>
<dbReference type="FunFam" id="3.90.1800.10:FF:000001">
    <property type="entry name" value="DNA-directed RNA polymerase subunit beta"/>
    <property type="match status" value="1"/>
</dbReference>
<dbReference type="Gene3D" id="1.10.132.30">
    <property type="match status" value="1"/>
</dbReference>
<dbReference type="Gene3D" id="1.10.150.390">
    <property type="match status" value="1"/>
</dbReference>
<dbReference type="Gene3D" id="1.10.1790.20">
    <property type="match status" value="1"/>
</dbReference>
<dbReference type="Gene3D" id="1.10.40.90">
    <property type="match status" value="1"/>
</dbReference>
<dbReference type="Gene3D" id="2.40.40.20">
    <property type="match status" value="1"/>
</dbReference>
<dbReference type="Gene3D" id="2.40.50.100">
    <property type="match status" value="4"/>
</dbReference>
<dbReference type="Gene3D" id="2.40.50.150">
    <property type="match status" value="1"/>
</dbReference>
<dbReference type="Gene3D" id="3.90.1100.10">
    <property type="match status" value="2"/>
</dbReference>
<dbReference type="Gene3D" id="2.30.150.10">
    <property type="entry name" value="DNA-directed RNA polymerase, beta subunit, external 1 domain"/>
    <property type="match status" value="1"/>
</dbReference>
<dbReference type="Gene3D" id="2.40.270.10">
    <property type="entry name" value="DNA-directed RNA polymerase, subunit 2, domain 6"/>
    <property type="match status" value="1"/>
</dbReference>
<dbReference type="Gene3D" id="3.90.1800.10">
    <property type="entry name" value="RNA polymerase alpha subunit dimerisation domain"/>
    <property type="match status" value="1"/>
</dbReference>
<dbReference type="Gene3D" id="4.10.860.120">
    <property type="entry name" value="RNA polymerase II, clamp domain"/>
    <property type="match status" value="1"/>
</dbReference>
<dbReference type="Gene3D" id="1.10.274.100">
    <property type="entry name" value="RNA polymerase Rpb1, domain 3"/>
    <property type="match status" value="2"/>
</dbReference>
<dbReference type="HAMAP" id="MF_01321">
    <property type="entry name" value="RNApol_bact_RpoB"/>
    <property type="match status" value="1"/>
</dbReference>
<dbReference type="HAMAP" id="MF_01322">
    <property type="entry name" value="RNApol_bact_RpoC"/>
    <property type="match status" value="1"/>
</dbReference>
<dbReference type="InterPro" id="IPR042107">
    <property type="entry name" value="DNA-dir_RNA_pol_bsu_ext_1_sf"/>
</dbReference>
<dbReference type="InterPro" id="IPR019462">
    <property type="entry name" value="DNA-dir_RNA_pol_bsu_external_1"/>
</dbReference>
<dbReference type="InterPro" id="IPR015712">
    <property type="entry name" value="DNA-dir_RNA_pol_su2"/>
</dbReference>
<dbReference type="InterPro" id="IPR007120">
    <property type="entry name" value="DNA-dir_RNAP_su2_dom"/>
</dbReference>
<dbReference type="InterPro" id="IPR037033">
    <property type="entry name" value="DNA-dir_RNAP_su2_hyb_sf"/>
</dbReference>
<dbReference type="InterPro" id="IPR045867">
    <property type="entry name" value="DNA-dir_RpoC_beta_prime"/>
</dbReference>
<dbReference type="InterPro" id="IPR012754">
    <property type="entry name" value="DNA-dir_RpoC_beta_prime_bact"/>
</dbReference>
<dbReference type="InterPro" id="IPR000722">
    <property type="entry name" value="RNA_pol_asu"/>
</dbReference>
<dbReference type="InterPro" id="IPR010243">
    <property type="entry name" value="RNA_pol_bsu_bac"/>
</dbReference>
<dbReference type="InterPro" id="IPR007121">
    <property type="entry name" value="RNA_pol_bsu_CS"/>
</dbReference>
<dbReference type="InterPro" id="IPR007644">
    <property type="entry name" value="RNA_pol_bsu_protrusion"/>
</dbReference>
<dbReference type="InterPro" id="IPR006592">
    <property type="entry name" value="RNA_pol_N"/>
</dbReference>
<dbReference type="InterPro" id="IPR007080">
    <property type="entry name" value="RNA_pol_Rpb1_1"/>
</dbReference>
<dbReference type="InterPro" id="IPR007066">
    <property type="entry name" value="RNA_pol_Rpb1_3"/>
</dbReference>
<dbReference type="InterPro" id="IPR042102">
    <property type="entry name" value="RNA_pol_Rpb1_3_sf"/>
</dbReference>
<dbReference type="InterPro" id="IPR007083">
    <property type="entry name" value="RNA_pol_Rpb1_4"/>
</dbReference>
<dbReference type="InterPro" id="IPR007081">
    <property type="entry name" value="RNA_pol_Rpb1_5"/>
</dbReference>
<dbReference type="InterPro" id="IPR044893">
    <property type="entry name" value="RNA_pol_Rpb1_clamp_domain"/>
</dbReference>
<dbReference type="InterPro" id="IPR007642">
    <property type="entry name" value="RNA_pol_Rpb2_2"/>
</dbReference>
<dbReference type="InterPro" id="IPR007645">
    <property type="entry name" value="RNA_pol_Rpb2_3"/>
</dbReference>
<dbReference type="InterPro" id="IPR007641">
    <property type="entry name" value="RNA_pol_Rpb2_7"/>
</dbReference>
<dbReference type="InterPro" id="IPR014724">
    <property type="entry name" value="RNA_pol_RPB2_OB-fold"/>
</dbReference>
<dbReference type="InterPro" id="IPR038120">
    <property type="entry name" value="Rpb1_funnel_sf"/>
</dbReference>
<dbReference type="NCBIfam" id="NF001616">
    <property type="entry name" value="PRK00405.1"/>
    <property type="match status" value="1"/>
</dbReference>
<dbReference type="NCBIfam" id="NF011417">
    <property type="entry name" value="PRK14844.1"/>
    <property type="match status" value="1"/>
</dbReference>
<dbReference type="NCBIfam" id="TIGR02013">
    <property type="entry name" value="rpoB"/>
    <property type="match status" value="1"/>
</dbReference>
<dbReference type="NCBIfam" id="TIGR02386">
    <property type="entry name" value="rpoC_TIGR"/>
    <property type="match status" value="1"/>
</dbReference>
<dbReference type="PANTHER" id="PTHR19376">
    <property type="entry name" value="DNA-DIRECTED RNA POLYMERASE"/>
    <property type="match status" value="1"/>
</dbReference>
<dbReference type="PANTHER" id="PTHR19376:SF54">
    <property type="entry name" value="DNA-DIRECTED RNA POLYMERASE SUBUNIT BETA"/>
    <property type="match status" value="1"/>
</dbReference>
<dbReference type="Pfam" id="PF04997">
    <property type="entry name" value="RNA_pol_Rpb1_1"/>
    <property type="match status" value="1"/>
</dbReference>
<dbReference type="Pfam" id="PF00623">
    <property type="entry name" value="RNA_pol_Rpb1_2"/>
    <property type="match status" value="2"/>
</dbReference>
<dbReference type="Pfam" id="PF04983">
    <property type="entry name" value="RNA_pol_Rpb1_3"/>
    <property type="match status" value="1"/>
</dbReference>
<dbReference type="Pfam" id="PF05000">
    <property type="entry name" value="RNA_pol_Rpb1_4"/>
    <property type="match status" value="1"/>
</dbReference>
<dbReference type="Pfam" id="PF04998">
    <property type="entry name" value="RNA_pol_Rpb1_5"/>
    <property type="match status" value="1"/>
</dbReference>
<dbReference type="Pfam" id="PF04563">
    <property type="entry name" value="RNA_pol_Rpb2_1"/>
    <property type="match status" value="1"/>
</dbReference>
<dbReference type="Pfam" id="PF04561">
    <property type="entry name" value="RNA_pol_Rpb2_2"/>
    <property type="match status" value="2"/>
</dbReference>
<dbReference type="Pfam" id="PF04565">
    <property type="entry name" value="RNA_pol_Rpb2_3"/>
    <property type="match status" value="1"/>
</dbReference>
<dbReference type="Pfam" id="PF10385">
    <property type="entry name" value="RNA_pol_Rpb2_45"/>
    <property type="match status" value="1"/>
</dbReference>
<dbReference type="Pfam" id="PF00562">
    <property type="entry name" value="RNA_pol_Rpb2_6"/>
    <property type="match status" value="1"/>
</dbReference>
<dbReference type="Pfam" id="PF04560">
    <property type="entry name" value="RNA_pol_Rpb2_7"/>
    <property type="match status" value="1"/>
</dbReference>
<dbReference type="SMART" id="SM00663">
    <property type="entry name" value="RPOLA_N"/>
    <property type="match status" value="1"/>
</dbReference>
<dbReference type="SUPFAM" id="SSF64484">
    <property type="entry name" value="beta and beta-prime subunits of DNA dependent RNA-polymerase"/>
    <property type="match status" value="2"/>
</dbReference>
<dbReference type="PROSITE" id="PS01166">
    <property type="entry name" value="RNA_POL_BETA"/>
    <property type="match status" value="1"/>
</dbReference>